<protein>
    <recommendedName>
        <fullName evidence="9 10">Myb-related protein A</fullName>
        <shortName evidence="9 10">A-Myb</shortName>
    </recommendedName>
    <alternativeName>
        <fullName>Myb-like protein 1</fullName>
    </alternativeName>
</protein>
<keyword id="KW-0007">Acetylation</keyword>
<keyword id="KW-0010">Activator</keyword>
<keyword id="KW-0025">Alternative splicing</keyword>
<keyword id="KW-0221">Differentiation</keyword>
<keyword id="KW-0238">DNA-binding</keyword>
<keyword id="KW-1017">Isopeptide bond</keyword>
<keyword id="KW-0539">Nucleus</keyword>
<keyword id="KW-1267">Proteomics identification</keyword>
<keyword id="KW-1185">Reference proteome</keyword>
<keyword id="KW-0677">Repeat</keyword>
<keyword id="KW-0744">Spermatogenesis</keyword>
<keyword id="KW-0804">Transcription</keyword>
<keyword id="KW-0805">Transcription regulation</keyword>
<keyword id="KW-0832">Ubl conjugation</keyword>
<comment type="function">
    <text evidence="2 6 7">Transcription factor that specifically recognizes the sequence 5'-YAAC[GT]G-3' (PubMed:7987850, PubMed:8058310). Acts as a master regulator of male meiosis by promoting expression of piRNAs: activates expression of both piRNA precursor RNAs and expression of protein-coding genes involved in piRNA metabolism (By similarity). The piRNA metabolic process mediates the repression of transposable elements during meiosis by forming complexes composed of piRNAs and Piwi proteins and governs the methylation and subsequent repression of transposons, which is essential for the germline integrity (By similarity). Transcriptional activator of SOX30 (By similarity).</text>
</comment>
<comment type="subunit">
    <text evidence="5">Component of the DREAM complex (also named LINC complex) at least composed of E2F4, E2F5, LIN9, LIN37, LIN52, LIN54, MYBL1, MYBL2, RBL1, RBL2, RBBP4, TFDP1 and TFDP2. The complex exists in quiescent cells where it represses cell cycle-dependent genes. It dissociates in S phase when LIN9, LIN37, LIN52 and LIN54 form a subcomplex that binds to MYBL2.</text>
</comment>
<comment type="subcellular location">
    <subcellularLocation>
        <location evidence="2">Nucleus</location>
    </subcellularLocation>
</comment>
<comment type="alternative products">
    <event type="alternative splicing"/>
    <isoform>
        <id>P10243-1</id>
        <name>1</name>
        <sequence type="displayed"/>
    </isoform>
    <isoform>
        <id>P10243-2</id>
        <name>2</name>
        <sequence type="described" ref="VSP_042912"/>
    </isoform>
</comment>
<comment type="tissue specificity">
    <text>Expressed in a variety of lymphoid and solid tumor lines cultured in vitro.</text>
</comment>
<comment type="online information" name="Atlas of Genetics and Cytogenetics in Oncology and Haematology">
    <link uri="https://atlasgeneticsoncology.org/gene/41468/MYBL1"/>
</comment>
<feature type="chain" id="PRO_0000197054" description="Myb-related protein A">
    <location>
        <begin position="1"/>
        <end position="752"/>
    </location>
</feature>
<feature type="domain" description="HTH myb-type 1" evidence="3">
    <location>
        <begin position="30"/>
        <end position="81"/>
    </location>
</feature>
<feature type="domain" description="HTH myb-type 2" evidence="3">
    <location>
        <begin position="82"/>
        <end position="137"/>
    </location>
</feature>
<feature type="domain" description="HTH myb-type 3" evidence="3">
    <location>
        <begin position="138"/>
        <end position="188"/>
    </location>
</feature>
<feature type="DNA-binding region" description="H-T-H motif" evidence="3">
    <location>
        <begin position="58"/>
        <end position="81"/>
    </location>
</feature>
<feature type="DNA-binding region" description="H-T-H motif" evidence="3">
    <location>
        <begin position="110"/>
        <end position="133"/>
    </location>
</feature>
<feature type="DNA-binding region" description="H-T-H motif" evidence="3">
    <location>
        <begin position="161"/>
        <end position="184"/>
    </location>
</feature>
<feature type="region of interest" description="Disordered" evidence="4">
    <location>
        <begin position="1"/>
        <end position="22"/>
    </location>
</feature>
<feature type="region of interest" description="Transcriptional activation domain" evidence="1">
    <location>
        <begin position="230"/>
        <end position="295"/>
    </location>
</feature>
<feature type="region of interest" description="Negative regulatory domain" evidence="1">
    <location>
        <begin position="298"/>
        <end position="553"/>
    </location>
</feature>
<feature type="region of interest" description="Disordered" evidence="4">
    <location>
        <begin position="451"/>
        <end position="480"/>
    </location>
</feature>
<feature type="modified residue" description="N6-acetyllysine" evidence="11">
    <location>
        <position position="394"/>
    </location>
</feature>
<feature type="cross-link" description="Glycyl lysine isopeptide (Lys-Gly) (interchain with G-Cter in SUMO2)" evidence="13">
    <location>
        <position position="199"/>
    </location>
</feature>
<feature type="cross-link" description="Glycyl lysine isopeptide (Lys-Gly) (interchain with G-Cter in SUMO2)" evidence="13">
    <location>
        <position position="592"/>
    </location>
</feature>
<feature type="cross-link" description="Glycyl lysine isopeptide (Lys-Gly) (interchain with G-Cter in SUMO2)" evidence="12 13">
    <location>
        <position position="602"/>
    </location>
</feature>
<feature type="splice variant" id="VSP_042912" description="In isoform 2." evidence="8">
    <location>
        <begin position="650"/>
        <end position="709"/>
    </location>
</feature>
<organism>
    <name type="scientific">Homo sapiens</name>
    <name type="common">Human</name>
    <dbReference type="NCBI Taxonomy" id="9606"/>
    <lineage>
        <taxon>Eukaryota</taxon>
        <taxon>Metazoa</taxon>
        <taxon>Chordata</taxon>
        <taxon>Craniata</taxon>
        <taxon>Vertebrata</taxon>
        <taxon>Euteleostomi</taxon>
        <taxon>Mammalia</taxon>
        <taxon>Eutheria</taxon>
        <taxon>Euarchontoglires</taxon>
        <taxon>Primates</taxon>
        <taxon>Haplorrhini</taxon>
        <taxon>Catarrhini</taxon>
        <taxon>Hominidae</taxon>
        <taxon>Homo</taxon>
    </lineage>
</organism>
<proteinExistence type="evidence at protein level"/>
<reference key="1">
    <citation type="journal article" date="2006" name="Nature">
        <title>DNA sequence and analysis of human chromosome 8.</title>
        <authorList>
            <person name="Nusbaum C."/>
            <person name="Mikkelsen T.S."/>
            <person name="Zody M.C."/>
            <person name="Asakawa S."/>
            <person name="Taudien S."/>
            <person name="Garber M."/>
            <person name="Kodira C.D."/>
            <person name="Schueler M.G."/>
            <person name="Shimizu A."/>
            <person name="Whittaker C.A."/>
            <person name="Chang J.L."/>
            <person name="Cuomo C.A."/>
            <person name="Dewar K."/>
            <person name="FitzGerald M.G."/>
            <person name="Yang X."/>
            <person name="Allen N.R."/>
            <person name="Anderson S."/>
            <person name="Asakawa T."/>
            <person name="Blechschmidt K."/>
            <person name="Bloom T."/>
            <person name="Borowsky M.L."/>
            <person name="Butler J."/>
            <person name="Cook A."/>
            <person name="Corum B."/>
            <person name="DeArellano K."/>
            <person name="DeCaprio D."/>
            <person name="Dooley K.T."/>
            <person name="Dorris L. III"/>
            <person name="Engels R."/>
            <person name="Gloeckner G."/>
            <person name="Hafez N."/>
            <person name="Hagopian D.S."/>
            <person name="Hall J.L."/>
            <person name="Ishikawa S.K."/>
            <person name="Jaffe D.B."/>
            <person name="Kamat A."/>
            <person name="Kudoh J."/>
            <person name="Lehmann R."/>
            <person name="Lokitsang T."/>
            <person name="Macdonald P."/>
            <person name="Major J.E."/>
            <person name="Matthews C.D."/>
            <person name="Mauceli E."/>
            <person name="Menzel U."/>
            <person name="Mihalev A.H."/>
            <person name="Minoshima S."/>
            <person name="Murayama Y."/>
            <person name="Naylor J.W."/>
            <person name="Nicol R."/>
            <person name="Nguyen C."/>
            <person name="O'Leary S.B."/>
            <person name="O'Neill K."/>
            <person name="Parker S.C.J."/>
            <person name="Polley A."/>
            <person name="Raymond C.K."/>
            <person name="Reichwald K."/>
            <person name="Rodriguez J."/>
            <person name="Sasaki T."/>
            <person name="Schilhabel M."/>
            <person name="Siddiqui R."/>
            <person name="Smith C.L."/>
            <person name="Sneddon T.P."/>
            <person name="Talamas J.A."/>
            <person name="Tenzin P."/>
            <person name="Topham K."/>
            <person name="Venkataraman V."/>
            <person name="Wen G."/>
            <person name="Yamazaki S."/>
            <person name="Young S.K."/>
            <person name="Zeng Q."/>
            <person name="Zimmer A.R."/>
            <person name="Rosenthal A."/>
            <person name="Birren B.W."/>
            <person name="Platzer M."/>
            <person name="Shimizu N."/>
            <person name="Lander E.S."/>
        </authorList>
    </citation>
    <scope>NUCLEOTIDE SEQUENCE [LARGE SCALE GENOMIC DNA]</scope>
</reference>
<reference key="2">
    <citation type="submission" date="2005-07" db="EMBL/GenBank/DDBJ databases">
        <authorList>
            <person name="Mural R.J."/>
            <person name="Istrail S."/>
            <person name="Sutton G."/>
            <person name="Florea L."/>
            <person name="Halpern A.L."/>
            <person name="Mobarry C.M."/>
            <person name="Lippert R."/>
            <person name="Walenz B."/>
            <person name="Shatkay H."/>
            <person name="Dew I."/>
            <person name="Miller J.R."/>
            <person name="Flanigan M.J."/>
            <person name="Edwards N.J."/>
            <person name="Bolanos R."/>
            <person name="Fasulo D."/>
            <person name="Halldorsson B.V."/>
            <person name="Hannenhalli S."/>
            <person name="Turner R."/>
            <person name="Yooseph S."/>
            <person name="Lu F."/>
            <person name="Nusskern D.R."/>
            <person name="Shue B.C."/>
            <person name="Zheng X.H."/>
            <person name="Zhong F."/>
            <person name="Delcher A.L."/>
            <person name="Huson D.H."/>
            <person name="Kravitz S.A."/>
            <person name="Mouchard L."/>
            <person name="Reinert K."/>
            <person name="Remington K.A."/>
            <person name="Clark A.G."/>
            <person name="Waterman M.S."/>
            <person name="Eichler E.E."/>
            <person name="Adams M.D."/>
            <person name="Hunkapiller M.W."/>
            <person name="Myers E.W."/>
            <person name="Venter J.C."/>
        </authorList>
    </citation>
    <scope>NUCLEOTIDE SEQUENCE [LARGE SCALE GENOMIC DNA]</scope>
</reference>
<reference key="3">
    <citation type="journal article" date="2004" name="Genome Res.">
        <title>The status, quality, and expansion of the NIH full-length cDNA project: the Mammalian Gene Collection (MGC).</title>
        <authorList>
            <consortium name="The MGC Project Team"/>
        </authorList>
    </citation>
    <scope>NUCLEOTIDE SEQUENCE [LARGE SCALE MRNA] (ISOFORM 2)</scope>
</reference>
<reference key="4">
    <citation type="journal article" date="1988" name="Nucleic Acids Res.">
        <title>Isolation of human cDNA clones of myb-related genes, A-myb and B-myb.</title>
        <authorList>
            <person name="Nomura N."/>
            <person name="Takahashi M."/>
            <person name="Matsui M."/>
            <person name="Ishii S."/>
            <person name="Date T."/>
            <person name="Sasamoto S."/>
            <person name="Ishizaki R."/>
        </authorList>
    </citation>
    <scope>NUCLEOTIDE SEQUENCE [MRNA] OF 1-745 (ISOFORM 1)</scope>
</reference>
<reference key="5">
    <citation type="journal article" date="1994" name="Oncogene">
        <title>The human A-myb protein is a strong activator of transcription.</title>
        <authorList>
            <person name="Golay J."/>
            <person name="Loffarelli L."/>
            <person name="Luppi M."/>
            <person name="Castellano M."/>
            <person name="Introna M."/>
        </authorList>
    </citation>
    <scope>NUCLEOTIDE SEQUENCE [MRNA] OF 398-752 (ISOFORM 1)</scope>
    <scope>FUNCTION</scope>
</reference>
<reference key="6">
    <citation type="journal article" date="1994" name="Cancer Res.">
        <title>DNA binding and transactivation activity of A-myb, a C-myb-related gene.</title>
        <authorList>
            <person name="Ma X.P."/>
            <person name="Calabretta B."/>
        </authorList>
    </citation>
    <scope>NUCLEOTIDE SEQUENCE [MRNA] OF 727-752 (ISOFORM 1/2)</scope>
    <scope>FUNCTION</scope>
</reference>
<reference key="7">
    <citation type="journal article" date="2007" name="Mol. Cell">
        <title>Evolutionarily conserved multisubunit RBL2/p130 and E2F4 protein complex represses human cell cycle-dependent genes in quiescence.</title>
        <authorList>
            <person name="Litovchick L."/>
            <person name="Sadasivam S."/>
            <person name="Florens L."/>
            <person name="Zhu X."/>
            <person name="Swanson S.K."/>
            <person name="Velmurugan S."/>
            <person name="Chen R."/>
            <person name="Washburn M.P."/>
            <person name="Liu X.S."/>
            <person name="DeCaprio J.A."/>
        </authorList>
    </citation>
    <scope>IDENTIFICATION IN THE DREAM COMPLEX</scope>
</reference>
<reference key="8">
    <citation type="journal article" date="2009" name="Science">
        <title>Lysine acetylation targets protein complexes and co-regulates major cellular functions.</title>
        <authorList>
            <person name="Choudhary C."/>
            <person name="Kumar C."/>
            <person name="Gnad F."/>
            <person name="Nielsen M.L."/>
            <person name="Rehman M."/>
            <person name="Walther T.C."/>
            <person name="Olsen J.V."/>
            <person name="Mann M."/>
        </authorList>
    </citation>
    <scope>ACETYLATION [LARGE SCALE ANALYSIS] AT LYS-394</scope>
    <scope>IDENTIFICATION BY MASS SPECTROMETRY [LARGE SCALE ANALYSIS]</scope>
</reference>
<reference key="9">
    <citation type="journal article" date="2013" name="J. Proteome Res.">
        <title>Toward a comprehensive characterization of a human cancer cell phosphoproteome.</title>
        <authorList>
            <person name="Zhou H."/>
            <person name="Di Palma S."/>
            <person name="Preisinger C."/>
            <person name="Peng M."/>
            <person name="Polat A.N."/>
            <person name="Heck A.J."/>
            <person name="Mohammed S."/>
        </authorList>
    </citation>
    <scope>IDENTIFICATION BY MASS SPECTROMETRY [LARGE SCALE ANALYSIS]</scope>
    <source>
        <tissue>Cervix carcinoma</tissue>
    </source>
</reference>
<reference key="10">
    <citation type="journal article" date="2014" name="Nat. Struct. Mol. Biol.">
        <title>Uncovering global SUMOylation signaling networks in a site-specific manner.</title>
        <authorList>
            <person name="Hendriks I.A."/>
            <person name="D'Souza R.C."/>
            <person name="Yang B."/>
            <person name="Verlaan-de Vries M."/>
            <person name="Mann M."/>
            <person name="Vertegaal A.C."/>
        </authorList>
    </citation>
    <scope>SUMOYLATION [LARGE SCALE ANALYSIS] AT LYS-602</scope>
    <scope>IDENTIFICATION BY MASS SPECTROMETRY [LARGE SCALE ANALYSIS]</scope>
</reference>
<reference key="11">
    <citation type="journal article" date="2017" name="Nat. Struct. Mol. Biol.">
        <title>Site-specific mapping of the human SUMO proteome reveals co-modification with phosphorylation.</title>
        <authorList>
            <person name="Hendriks I.A."/>
            <person name="Lyon D."/>
            <person name="Young C."/>
            <person name="Jensen L.J."/>
            <person name="Vertegaal A.C."/>
            <person name="Nielsen M.L."/>
        </authorList>
    </citation>
    <scope>SUMOYLATION [LARGE SCALE ANALYSIS] AT LYS-199; LYS-592 AND LYS-602</scope>
    <scope>IDENTIFICATION BY MASS SPECTROMETRY [LARGE SCALE ANALYSIS]</scope>
</reference>
<dbReference type="EMBL" id="AC083928">
    <property type="status" value="NOT_ANNOTATED_CDS"/>
    <property type="molecule type" value="Genomic_DNA"/>
</dbReference>
<dbReference type="EMBL" id="CH471068">
    <property type="protein sequence ID" value="EAW86912.1"/>
    <property type="molecule type" value="Genomic_DNA"/>
</dbReference>
<dbReference type="EMBL" id="BC101188">
    <property type="protein sequence ID" value="AAI01189.1"/>
    <property type="molecule type" value="mRNA"/>
</dbReference>
<dbReference type="EMBL" id="X13294">
    <property type="protein sequence ID" value="CAA31656.1"/>
    <property type="molecule type" value="mRNA"/>
</dbReference>
<dbReference type="EMBL" id="X66087">
    <property type="protein sequence ID" value="CAA46886.1"/>
    <property type="molecule type" value="mRNA"/>
</dbReference>
<dbReference type="CCDS" id="CCDS47867.1">
    <molecule id="P10243-1"/>
</dbReference>
<dbReference type="CCDS" id="CCDS55241.1">
    <molecule id="P10243-2"/>
</dbReference>
<dbReference type="PIR" id="S03423">
    <property type="entry name" value="S03423"/>
</dbReference>
<dbReference type="RefSeq" id="NP_001073885.1">
    <molecule id="P10243-1"/>
    <property type="nucleotide sequence ID" value="NM_001080416.4"/>
</dbReference>
<dbReference type="RefSeq" id="NP_001138227.1">
    <molecule id="P10243-2"/>
    <property type="nucleotide sequence ID" value="NM_001144755.3"/>
</dbReference>
<dbReference type="SMR" id="P10243"/>
<dbReference type="BioGRID" id="110688">
    <property type="interactions" value="13"/>
</dbReference>
<dbReference type="DIP" id="DIP-624N"/>
<dbReference type="FunCoup" id="P10243">
    <property type="interactions" value="2528"/>
</dbReference>
<dbReference type="IntAct" id="P10243">
    <property type="interactions" value="8"/>
</dbReference>
<dbReference type="STRING" id="9606.ENSP00000429633"/>
<dbReference type="GlyGen" id="P10243">
    <property type="glycosylation" value="1 site, 1 O-linked glycan (1 site)"/>
</dbReference>
<dbReference type="iPTMnet" id="P10243"/>
<dbReference type="PhosphoSitePlus" id="P10243"/>
<dbReference type="BioMuta" id="MYBL1"/>
<dbReference type="DMDM" id="1171089"/>
<dbReference type="jPOST" id="P10243"/>
<dbReference type="MassIVE" id="P10243"/>
<dbReference type="PaxDb" id="9606-ENSP00000429633"/>
<dbReference type="PeptideAtlas" id="P10243"/>
<dbReference type="ProteomicsDB" id="52584">
    <molecule id="P10243-1"/>
</dbReference>
<dbReference type="ProteomicsDB" id="52585">
    <molecule id="P10243-2"/>
</dbReference>
<dbReference type="Antibodypedia" id="1831">
    <property type="antibodies" value="210 antibodies from 27 providers"/>
</dbReference>
<dbReference type="DNASU" id="4603"/>
<dbReference type="Ensembl" id="ENST00000522677.8">
    <molecule id="P10243-1"/>
    <property type="protein sequence ID" value="ENSP00000429633.2"/>
    <property type="gene ID" value="ENSG00000185697.17"/>
</dbReference>
<dbReference type="Ensembl" id="ENST00000524176.2">
    <molecule id="P10243-2"/>
    <property type="protein sequence ID" value="ENSP00000428011.2"/>
    <property type="gene ID" value="ENSG00000185697.17"/>
</dbReference>
<dbReference type="GeneID" id="4603"/>
<dbReference type="KEGG" id="hsa:4603"/>
<dbReference type="MANE-Select" id="ENST00000522677.8">
    <property type="protein sequence ID" value="ENSP00000429633.2"/>
    <property type="RefSeq nucleotide sequence ID" value="NM_001080416.4"/>
    <property type="RefSeq protein sequence ID" value="NP_001073885.1"/>
</dbReference>
<dbReference type="UCSC" id="uc003xwj.4">
    <molecule id="P10243-1"/>
    <property type="organism name" value="human"/>
</dbReference>
<dbReference type="AGR" id="HGNC:7547"/>
<dbReference type="CTD" id="4603"/>
<dbReference type="DisGeNET" id="4603"/>
<dbReference type="GeneCards" id="MYBL1"/>
<dbReference type="HGNC" id="HGNC:7547">
    <property type="gene designation" value="MYBL1"/>
</dbReference>
<dbReference type="HPA" id="ENSG00000185697">
    <property type="expression patterns" value="Tissue enhanced (lymphoid tissue, testis)"/>
</dbReference>
<dbReference type="MalaCards" id="MYBL1"/>
<dbReference type="MIM" id="159405">
    <property type="type" value="gene"/>
</dbReference>
<dbReference type="neXtProt" id="NX_P10243"/>
<dbReference type="OpenTargets" id="ENSG00000185697"/>
<dbReference type="PharmGKB" id="PA31347"/>
<dbReference type="VEuPathDB" id="HostDB:ENSG00000185697"/>
<dbReference type="eggNOG" id="KOG0048">
    <property type="taxonomic scope" value="Eukaryota"/>
</dbReference>
<dbReference type="GeneTree" id="ENSGT00940000157709"/>
<dbReference type="HOGENOM" id="CLU_015440_2_2_1"/>
<dbReference type="InParanoid" id="P10243"/>
<dbReference type="OMA" id="QMGGFPF"/>
<dbReference type="OrthoDB" id="2143914at2759"/>
<dbReference type="PAN-GO" id="P10243">
    <property type="GO annotations" value="5 GO annotations based on evolutionary models"/>
</dbReference>
<dbReference type="PhylomeDB" id="P10243"/>
<dbReference type="TreeFam" id="TF326257"/>
<dbReference type="PathwayCommons" id="P10243"/>
<dbReference type="Reactome" id="R-HSA-5601884">
    <property type="pathway name" value="PIWI-interacting RNA (piRNA) biogenesis"/>
</dbReference>
<dbReference type="SignaLink" id="P10243"/>
<dbReference type="SIGNOR" id="P10243"/>
<dbReference type="BioGRID-ORCS" id="4603">
    <property type="hits" value="38 hits in 1183 CRISPR screens"/>
</dbReference>
<dbReference type="ChiTaRS" id="MYBL1">
    <property type="organism name" value="human"/>
</dbReference>
<dbReference type="GenomeRNAi" id="4603"/>
<dbReference type="Pharos" id="P10243">
    <property type="development level" value="Tbio"/>
</dbReference>
<dbReference type="PRO" id="PR:P10243"/>
<dbReference type="Proteomes" id="UP000005640">
    <property type="component" value="Chromosome 8"/>
</dbReference>
<dbReference type="RNAct" id="P10243">
    <property type="molecule type" value="protein"/>
</dbReference>
<dbReference type="Bgee" id="ENSG00000185697">
    <property type="expression patterns" value="Expressed in calcaneal tendon and 190 other cell types or tissues"/>
</dbReference>
<dbReference type="ExpressionAtlas" id="P10243">
    <property type="expression patterns" value="baseline and differential"/>
</dbReference>
<dbReference type="GO" id="GO:0005654">
    <property type="term" value="C:nucleoplasm"/>
    <property type="evidence" value="ECO:0000314"/>
    <property type="project" value="HPA"/>
</dbReference>
<dbReference type="GO" id="GO:0005634">
    <property type="term" value="C:nucleus"/>
    <property type="evidence" value="ECO:0000250"/>
    <property type="project" value="UniProtKB"/>
</dbReference>
<dbReference type="GO" id="GO:0001228">
    <property type="term" value="F:DNA-binding transcription activator activity, RNA polymerase II-specific"/>
    <property type="evidence" value="ECO:0000314"/>
    <property type="project" value="NTNU_SB"/>
</dbReference>
<dbReference type="GO" id="GO:0000981">
    <property type="term" value="F:DNA-binding transcription factor activity, RNA polymerase II-specific"/>
    <property type="evidence" value="ECO:0000318"/>
    <property type="project" value="GO_Central"/>
</dbReference>
<dbReference type="GO" id="GO:0000978">
    <property type="term" value="F:RNA polymerase II cis-regulatory region sequence-specific DNA binding"/>
    <property type="evidence" value="ECO:0000314"/>
    <property type="project" value="NTNU_SB"/>
</dbReference>
<dbReference type="GO" id="GO:0030154">
    <property type="term" value="P:cell differentiation"/>
    <property type="evidence" value="ECO:0007669"/>
    <property type="project" value="UniProtKB-KW"/>
</dbReference>
<dbReference type="GO" id="GO:0007141">
    <property type="term" value="P:male meiosis I"/>
    <property type="evidence" value="ECO:0000250"/>
    <property type="project" value="UniProtKB"/>
</dbReference>
<dbReference type="GO" id="GO:0000278">
    <property type="term" value="P:mitotic cell cycle"/>
    <property type="evidence" value="ECO:0000318"/>
    <property type="project" value="GO_Central"/>
</dbReference>
<dbReference type="GO" id="GO:0045893">
    <property type="term" value="P:positive regulation of DNA-templated transcription"/>
    <property type="evidence" value="ECO:0000303"/>
    <property type="project" value="UniProtKB"/>
</dbReference>
<dbReference type="GO" id="GO:0140543">
    <property type="term" value="P:positive regulation of piRNA transcription"/>
    <property type="evidence" value="ECO:0000250"/>
    <property type="project" value="UniProtKB"/>
</dbReference>
<dbReference type="GO" id="GO:0045944">
    <property type="term" value="P:positive regulation of transcription by RNA polymerase II"/>
    <property type="evidence" value="ECO:0000314"/>
    <property type="project" value="NTNU_SB"/>
</dbReference>
<dbReference type="GO" id="GO:0007283">
    <property type="term" value="P:spermatogenesis"/>
    <property type="evidence" value="ECO:0000250"/>
    <property type="project" value="UniProtKB"/>
</dbReference>
<dbReference type="CDD" id="cd00167">
    <property type="entry name" value="SANT"/>
    <property type="match status" value="3"/>
</dbReference>
<dbReference type="FunFam" id="1.10.10.60:FF:000010">
    <property type="entry name" value="Transcriptional activator Myb isoform A"/>
    <property type="match status" value="1"/>
</dbReference>
<dbReference type="FunFam" id="1.10.10.60:FF:000016">
    <property type="entry name" value="Transcriptional activator Myb isoform A"/>
    <property type="match status" value="1"/>
</dbReference>
<dbReference type="FunFam" id="1.10.10.60:FF:000042">
    <property type="entry name" value="Transcriptional activator Myb isoform A"/>
    <property type="match status" value="1"/>
</dbReference>
<dbReference type="Gene3D" id="1.10.10.60">
    <property type="entry name" value="Homeodomain-like"/>
    <property type="match status" value="3"/>
</dbReference>
<dbReference type="InterPro" id="IPR015395">
    <property type="entry name" value="C-myb_C"/>
</dbReference>
<dbReference type="InterPro" id="IPR009057">
    <property type="entry name" value="Homeodomain-like_sf"/>
</dbReference>
<dbReference type="InterPro" id="IPR017930">
    <property type="entry name" value="Myb_dom"/>
</dbReference>
<dbReference type="InterPro" id="IPR050560">
    <property type="entry name" value="MYB_TF"/>
</dbReference>
<dbReference type="InterPro" id="IPR001005">
    <property type="entry name" value="SANT/Myb"/>
</dbReference>
<dbReference type="InterPro" id="IPR012642">
    <property type="entry name" value="Tscrpt_reg_Wos2-domain"/>
</dbReference>
<dbReference type="PANTHER" id="PTHR45614">
    <property type="entry name" value="MYB PROTEIN-RELATED"/>
    <property type="match status" value="1"/>
</dbReference>
<dbReference type="PANTHER" id="PTHR45614:SF265">
    <property type="entry name" value="MYB-LIKE DOMAIN-CONTAINING PROTEIN-RELATED"/>
    <property type="match status" value="1"/>
</dbReference>
<dbReference type="Pfam" id="PF09316">
    <property type="entry name" value="Cmyb_C"/>
    <property type="match status" value="1"/>
</dbReference>
<dbReference type="Pfam" id="PF07988">
    <property type="entry name" value="LMSTEN"/>
    <property type="match status" value="1"/>
</dbReference>
<dbReference type="Pfam" id="PF13921">
    <property type="entry name" value="Myb_DNA-bind_6"/>
    <property type="match status" value="1"/>
</dbReference>
<dbReference type="Pfam" id="PF00249">
    <property type="entry name" value="Myb_DNA-binding"/>
    <property type="match status" value="1"/>
</dbReference>
<dbReference type="SMART" id="SM00717">
    <property type="entry name" value="SANT"/>
    <property type="match status" value="3"/>
</dbReference>
<dbReference type="SUPFAM" id="SSF46689">
    <property type="entry name" value="Homeodomain-like"/>
    <property type="match status" value="2"/>
</dbReference>
<dbReference type="PROSITE" id="PS51294">
    <property type="entry name" value="HTH_MYB"/>
    <property type="match status" value="3"/>
</dbReference>
<accession>P10243</accession>
<accession>E7EW29</accession>
<accession>Q495F9</accession>
<gene>
    <name type="primary">MYBL1</name>
    <name type="synonym">AMYB</name>
</gene>
<name>MYBA_HUMAN</name>
<sequence length="752" mass="85887">MAKRSRSEDEDDDLQYADHDYEVPQQKGLKKLWNRVKWTRDEDDKLKKLVEQHGTDDWTLIASHLQNRSDFQCQHRWQKVLNPELIKGPWTKEEDQRVIELVQKYGPKRWSLIAKHLKGRIGKQCRERWHNHLNPEVKKSSWTEEEDRIIYEAHKRLGNRWAEIAKLLPGRTDNSIKNHWNSTMRRKVEQEGYLQDGIKSERSSSKLQHKPCAAMDHMQTQNQFYIPVQIPGYQYVSPEGNCIEHVQPTSAFIQQPFIDEDPDKEKKIKELEMLLMSAENEVRRKRIPSQPGSFSSWSGSFLMDDNMSNTLNSLDEHTSEFYSMDENQPVSAQQNSPTKFLAVEANAVLSSLQTIPEFAETLELIESDPVAWSDVTSFDISDAAASPIKSTPVKLMRIQHNEGAMECQFNVSLVLEGKKNTCNGGNSEAVPLTSPNIAKFSTPPAILRKKRKMRVGHSPGSELRDGSLNDGGNMALKHTPLKTLPFSPSQFFNTCPGNEQLNIENPSFTSTPICGQKALITTPLHKETTPKDQKENVGFRTPTIRRSILGTTPRTPTPFKNALAAQEKKYGPLKIVSQPLAFLEEDIREVLKEETGTDLFLKEEDEPAYKSCKQENTASGKKVRKSLVLDNWEKEESGTQLLTEDISDMQSENRFTTSLLMIPLLEIHDNRCNLIPEKQDINSTNKTYTLTKKKPNPNTSKVVKLEKNLQSNCEWETVVYGKTEDQLIMTEQARRYLSTYTATSSTSRALIL</sequence>
<evidence type="ECO:0000250" key="1"/>
<evidence type="ECO:0000250" key="2">
    <source>
        <dbReference type="UniProtKB" id="P51960"/>
    </source>
</evidence>
<evidence type="ECO:0000255" key="3">
    <source>
        <dbReference type="PROSITE-ProRule" id="PRU00625"/>
    </source>
</evidence>
<evidence type="ECO:0000256" key="4">
    <source>
        <dbReference type="SAM" id="MobiDB-lite"/>
    </source>
</evidence>
<evidence type="ECO:0000269" key="5">
    <source>
    </source>
</evidence>
<evidence type="ECO:0000269" key="6">
    <source>
    </source>
</evidence>
<evidence type="ECO:0000269" key="7">
    <source>
    </source>
</evidence>
<evidence type="ECO:0000303" key="8">
    <source>
    </source>
</evidence>
<evidence type="ECO:0000303" key="9">
    <source>
    </source>
</evidence>
<evidence type="ECO:0000303" key="10">
    <source>
    </source>
</evidence>
<evidence type="ECO:0007744" key="11">
    <source>
    </source>
</evidence>
<evidence type="ECO:0007744" key="12">
    <source>
    </source>
</evidence>
<evidence type="ECO:0007744" key="13">
    <source>
    </source>
</evidence>